<gene>
    <name evidence="1" type="primary">matK</name>
</gene>
<organism>
    <name type="scientific">Iris sanguinea</name>
    <name type="common">Japanese iris</name>
    <dbReference type="NCBI Taxonomy" id="198824"/>
    <lineage>
        <taxon>Eukaryota</taxon>
        <taxon>Viridiplantae</taxon>
        <taxon>Streptophyta</taxon>
        <taxon>Embryophyta</taxon>
        <taxon>Tracheophyta</taxon>
        <taxon>Spermatophyta</taxon>
        <taxon>Magnoliopsida</taxon>
        <taxon>Liliopsida</taxon>
        <taxon>Asparagales</taxon>
        <taxon>Iridaceae</taxon>
        <taxon>Iridoideae</taxon>
        <taxon>Irideae</taxon>
        <taxon>Iris</taxon>
    </lineage>
</organism>
<name>MATK_IRISA</name>
<accession>Q5GF60</accession>
<dbReference type="EMBL" id="AY596646">
    <property type="protein sequence ID" value="AAW67445.1"/>
    <property type="molecule type" value="Genomic_DNA"/>
</dbReference>
<dbReference type="GO" id="GO:0009507">
    <property type="term" value="C:chloroplast"/>
    <property type="evidence" value="ECO:0007669"/>
    <property type="project" value="UniProtKB-SubCell"/>
</dbReference>
<dbReference type="GO" id="GO:0003723">
    <property type="term" value="F:RNA binding"/>
    <property type="evidence" value="ECO:0007669"/>
    <property type="project" value="UniProtKB-KW"/>
</dbReference>
<dbReference type="GO" id="GO:0006397">
    <property type="term" value="P:mRNA processing"/>
    <property type="evidence" value="ECO:0007669"/>
    <property type="project" value="UniProtKB-KW"/>
</dbReference>
<dbReference type="GO" id="GO:0008380">
    <property type="term" value="P:RNA splicing"/>
    <property type="evidence" value="ECO:0007669"/>
    <property type="project" value="UniProtKB-UniRule"/>
</dbReference>
<dbReference type="GO" id="GO:0008033">
    <property type="term" value="P:tRNA processing"/>
    <property type="evidence" value="ECO:0007669"/>
    <property type="project" value="UniProtKB-KW"/>
</dbReference>
<dbReference type="HAMAP" id="MF_01390">
    <property type="entry name" value="MatK"/>
    <property type="match status" value="1"/>
</dbReference>
<dbReference type="InterPro" id="IPR024937">
    <property type="entry name" value="Domain_X"/>
</dbReference>
<dbReference type="InterPro" id="IPR002866">
    <property type="entry name" value="Maturase_MatK"/>
</dbReference>
<dbReference type="InterPro" id="IPR024942">
    <property type="entry name" value="Maturase_MatK_N"/>
</dbReference>
<dbReference type="PANTHER" id="PTHR34811">
    <property type="entry name" value="MATURASE K"/>
    <property type="match status" value="1"/>
</dbReference>
<dbReference type="PANTHER" id="PTHR34811:SF1">
    <property type="entry name" value="MATURASE K"/>
    <property type="match status" value="1"/>
</dbReference>
<dbReference type="Pfam" id="PF01348">
    <property type="entry name" value="Intron_maturas2"/>
    <property type="match status" value="1"/>
</dbReference>
<dbReference type="Pfam" id="PF01824">
    <property type="entry name" value="MatK_N"/>
    <property type="match status" value="1"/>
</dbReference>
<proteinExistence type="inferred from homology"/>
<feature type="chain" id="PRO_0000143438" description="Maturase K">
    <location>
        <begin position="1"/>
        <end position="522"/>
    </location>
</feature>
<keyword id="KW-0150">Chloroplast</keyword>
<keyword id="KW-0507">mRNA processing</keyword>
<keyword id="KW-0934">Plastid</keyword>
<keyword id="KW-0694">RNA-binding</keyword>
<keyword id="KW-0819">tRNA processing</keyword>
<geneLocation type="chloroplast"/>
<reference key="1">
    <citation type="journal article" date="2004" name="Mol. Phylogenet. Evol.">
        <title>Phylogeny of Iris based on chloroplast matK gene and trnK intron sequence data.</title>
        <authorList>
            <person name="Wilson C.A."/>
        </authorList>
    </citation>
    <scope>NUCLEOTIDE SEQUENCE [GENOMIC DNA]</scope>
</reference>
<evidence type="ECO:0000255" key="1">
    <source>
        <dbReference type="HAMAP-Rule" id="MF_01390"/>
    </source>
</evidence>
<sequence length="522" mass="62229">MEXLQGYLEKGRSRQQPLLYPLLFQEYIYALAHDRGLKGSLFYEPTEVFGYDSXSRLALVKRLIIXIYQQNFFLFGVNDSNKNRFVSHHHNNFCYSHFYSQVISQGFAILVEIPFSLRLXSYFEKKEIPXSHNLRSIHSIFPFLEDKLLHLNYVSDILIPHPIHMEILVQILQCWIQDVPLLHFLRFFLHKYHNWNSFLITPKKSIYVFSKENKRLFRFLYNSYVSECEFLLVFLRKQSSYLRLTSFGFFLERRHFYVKIERLRMQHLILIVVCRDFFQGTLWSFKDPFMXXXXXXXXXVLASXGTHLLXKKWXYNXXNLWQYYFHFWYQSYRIHMNQLSXYSFYFLGYLSSLLKNSSTVRNQMLENSFLIDTVTNKFETLVPVIFLIGSLSKAQFCTVSGHPISKPIWADLSDSEIIERFGRMCRNLSHYHSGSSKKQGLYRIKYILRLSCARTSAXTHXSTVRTFXRRLGSGLLEEFFTEEEQVLSLILPKTIPFTFYGSHKERIWYLDIIRINDLVNHS</sequence>
<protein>
    <recommendedName>
        <fullName evidence="1">Maturase K</fullName>
    </recommendedName>
    <alternativeName>
        <fullName evidence="1">Intron maturase</fullName>
    </alternativeName>
</protein>
<comment type="function">
    <text evidence="1">Usually encoded in the trnK tRNA gene intron. Probably assists in splicing its own and other chloroplast group II introns.</text>
</comment>
<comment type="subcellular location">
    <subcellularLocation>
        <location>Plastid</location>
        <location>Chloroplast</location>
    </subcellularLocation>
</comment>
<comment type="similarity">
    <text evidence="1">Belongs to the intron maturase 2 family. MatK subfamily.</text>
</comment>